<keyword id="KW-0240">DNA-directed RNA polymerase</keyword>
<keyword id="KW-0548">Nucleotidyltransferase</keyword>
<keyword id="KW-1185">Reference proteome</keyword>
<keyword id="KW-0804">Transcription</keyword>
<keyword id="KW-0808">Transferase</keyword>
<comment type="function">
    <text evidence="1">DNA-dependent RNA polymerase catalyzes the transcription of DNA into RNA using the four ribonucleoside triphosphates as substrates.</text>
</comment>
<comment type="catalytic activity">
    <reaction evidence="1">
        <text>RNA(n) + a ribonucleoside 5'-triphosphate = RNA(n+1) + diphosphate</text>
        <dbReference type="Rhea" id="RHEA:21248"/>
        <dbReference type="Rhea" id="RHEA-COMP:14527"/>
        <dbReference type="Rhea" id="RHEA-COMP:17342"/>
        <dbReference type="ChEBI" id="CHEBI:33019"/>
        <dbReference type="ChEBI" id="CHEBI:61557"/>
        <dbReference type="ChEBI" id="CHEBI:140395"/>
        <dbReference type="EC" id="2.7.7.6"/>
    </reaction>
</comment>
<comment type="subunit">
    <text evidence="1">Homodimer. The RNAP catalytic core consists of 2 alpha, 1 beta, 1 beta' and 1 omega subunit. When a sigma factor is associated with the core the holoenzyme is formed, which can initiate transcription.</text>
</comment>
<comment type="domain">
    <text evidence="1">The N-terminal domain is essential for RNAP assembly and basal transcription, whereas the C-terminal domain is involved in interaction with transcriptional regulators and with upstream promoter elements.</text>
</comment>
<comment type="similarity">
    <text evidence="1">Belongs to the RNA polymerase alpha chain family.</text>
</comment>
<protein>
    <recommendedName>
        <fullName evidence="1">DNA-directed RNA polymerase subunit alpha</fullName>
        <shortName evidence="1">RNAP subunit alpha</shortName>
        <ecNumber evidence="1">2.7.7.6</ecNumber>
    </recommendedName>
    <alternativeName>
        <fullName evidence="1">RNA polymerase subunit alpha</fullName>
    </alternativeName>
    <alternativeName>
        <fullName evidence="1">Transcriptase subunit alpha</fullName>
    </alternativeName>
</protein>
<dbReference type="EC" id="2.7.7.6" evidence="1"/>
<dbReference type="EMBL" id="CP000382">
    <property type="protein sequence ID" value="ABK61467.1"/>
    <property type="molecule type" value="Genomic_DNA"/>
</dbReference>
<dbReference type="RefSeq" id="WP_003367785.1">
    <property type="nucleotide sequence ID" value="NC_008593.1"/>
</dbReference>
<dbReference type="SMR" id="A0PXX5"/>
<dbReference type="STRING" id="386415.NT01CX_1144"/>
<dbReference type="KEGG" id="cno:NT01CX_1144"/>
<dbReference type="eggNOG" id="COG0202">
    <property type="taxonomic scope" value="Bacteria"/>
</dbReference>
<dbReference type="HOGENOM" id="CLU_053084_0_1_9"/>
<dbReference type="Proteomes" id="UP000008220">
    <property type="component" value="Chromosome"/>
</dbReference>
<dbReference type="GO" id="GO:0005737">
    <property type="term" value="C:cytoplasm"/>
    <property type="evidence" value="ECO:0007669"/>
    <property type="project" value="UniProtKB-ARBA"/>
</dbReference>
<dbReference type="GO" id="GO:0000428">
    <property type="term" value="C:DNA-directed RNA polymerase complex"/>
    <property type="evidence" value="ECO:0007669"/>
    <property type="project" value="UniProtKB-KW"/>
</dbReference>
<dbReference type="GO" id="GO:0003677">
    <property type="term" value="F:DNA binding"/>
    <property type="evidence" value="ECO:0007669"/>
    <property type="project" value="UniProtKB-UniRule"/>
</dbReference>
<dbReference type="GO" id="GO:0003899">
    <property type="term" value="F:DNA-directed RNA polymerase activity"/>
    <property type="evidence" value="ECO:0007669"/>
    <property type="project" value="UniProtKB-UniRule"/>
</dbReference>
<dbReference type="GO" id="GO:0046983">
    <property type="term" value="F:protein dimerization activity"/>
    <property type="evidence" value="ECO:0007669"/>
    <property type="project" value="InterPro"/>
</dbReference>
<dbReference type="GO" id="GO:0006351">
    <property type="term" value="P:DNA-templated transcription"/>
    <property type="evidence" value="ECO:0007669"/>
    <property type="project" value="UniProtKB-UniRule"/>
</dbReference>
<dbReference type="CDD" id="cd06928">
    <property type="entry name" value="RNAP_alpha_NTD"/>
    <property type="match status" value="1"/>
</dbReference>
<dbReference type="FunFam" id="1.10.150.20:FF:000001">
    <property type="entry name" value="DNA-directed RNA polymerase subunit alpha"/>
    <property type="match status" value="1"/>
</dbReference>
<dbReference type="FunFam" id="2.170.120.12:FF:000001">
    <property type="entry name" value="DNA-directed RNA polymerase subunit alpha"/>
    <property type="match status" value="1"/>
</dbReference>
<dbReference type="Gene3D" id="1.10.150.20">
    <property type="entry name" value="5' to 3' exonuclease, C-terminal subdomain"/>
    <property type="match status" value="1"/>
</dbReference>
<dbReference type="Gene3D" id="2.170.120.12">
    <property type="entry name" value="DNA-directed RNA polymerase, insert domain"/>
    <property type="match status" value="1"/>
</dbReference>
<dbReference type="Gene3D" id="3.30.1360.10">
    <property type="entry name" value="RNA polymerase, RBP11-like subunit"/>
    <property type="match status" value="1"/>
</dbReference>
<dbReference type="HAMAP" id="MF_00059">
    <property type="entry name" value="RNApol_bact_RpoA"/>
    <property type="match status" value="1"/>
</dbReference>
<dbReference type="InterPro" id="IPR011262">
    <property type="entry name" value="DNA-dir_RNA_pol_insert"/>
</dbReference>
<dbReference type="InterPro" id="IPR011263">
    <property type="entry name" value="DNA-dir_RNA_pol_RpoA/D/Rpb3"/>
</dbReference>
<dbReference type="InterPro" id="IPR011773">
    <property type="entry name" value="DNA-dir_RpoA"/>
</dbReference>
<dbReference type="InterPro" id="IPR036603">
    <property type="entry name" value="RBP11-like"/>
</dbReference>
<dbReference type="InterPro" id="IPR011260">
    <property type="entry name" value="RNAP_asu_C"/>
</dbReference>
<dbReference type="InterPro" id="IPR036643">
    <property type="entry name" value="RNApol_insert_sf"/>
</dbReference>
<dbReference type="NCBIfam" id="NF003513">
    <property type="entry name" value="PRK05182.1-2"/>
    <property type="match status" value="1"/>
</dbReference>
<dbReference type="NCBIfam" id="NF003515">
    <property type="entry name" value="PRK05182.2-1"/>
    <property type="match status" value="1"/>
</dbReference>
<dbReference type="NCBIfam" id="NF003516">
    <property type="entry name" value="PRK05182.2-2"/>
    <property type="match status" value="1"/>
</dbReference>
<dbReference type="NCBIfam" id="NF003519">
    <property type="entry name" value="PRK05182.2-5"/>
    <property type="match status" value="1"/>
</dbReference>
<dbReference type="NCBIfam" id="TIGR02027">
    <property type="entry name" value="rpoA"/>
    <property type="match status" value="1"/>
</dbReference>
<dbReference type="Pfam" id="PF01000">
    <property type="entry name" value="RNA_pol_A_bac"/>
    <property type="match status" value="1"/>
</dbReference>
<dbReference type="Pfam" id="PF03118">
    <property type="entry name" value="RNA_pol_A_CTD"/>
    <property type="match status" value="1"/>
</dbReference>
<dbReference type="Pfam" id="PF01193">
    <property type="entry name" value="RNA_pol_L"/>
    <property type="match status" value="1"/>
</dbReference>
<dbReference type="SMART" id="SM00662">
    <property type="entry name" value="RPOLD"/>
    <property type="match status" value="1"/>
</dbReference>
<dbReference type="SUPFAM" id="SSF47789">
    <property type="entry name" value="C-terminal domain of RNA polymerase alpha subunit"/>
    <property type="match status" value="1"/>
</dbReference>
<dbReference type="SUPFAM" id="SSF56553">
    <property type="entry name" value="Insert subdomain of RNA polymerase alpha subunit"/>
    <property type="match status" value="1"/>
</dbReference>
<dbReference type="SUPFAM" id="SSF55257">
    <property type="entry name" value="RBP11-like subunits of RNA polymerase"/>
    <property type="match status" value="1"/>
</dbReference>
<proteinExistence type="inferred from homology"/>
<organism>
    <name type="scientific">Clostridium novyi (strain NT)</name>
    <dbReference type="NCBI Taxonomy" id="386415"/>
    <lineage>
        <taxon>Bacteria</taxon>
        <taxon>Bacillati</taxon>
        <taxon>Bacillota</taxon>
        <taxon>Clostridia</taxon>
        <taxon>Eubacteriales</taxon>
        <taxon>Clostridiaceae</taxon>
        <taxon>Clostridium</taxon>
    </lineage>
</organism>
<reference key="1">
    <citation type="journal article" date="2006" name="Nat. Biotechnol.">
        <title>The genome and transcriptomes of the anti-tumor agent Clostridium novyi-NT.</title>
        <authorList>
            <person name="Bettegowda C."/>
            <person name="Huang X."/>
            <person name="Lin J."/>
            <person name="Cheong I."/>
            <person name="Kohli M."/>
            <person name="Szabo S.A."/>
            <person name="Zhang X."/>
            <person name="Diaz L.A. Jr."/>
            <person name="Velculescu V.E."/>
            <person name="Parmigiani G."/>
            <person name="Kinzler K.W."/>
            <person name="Vogelstein B."/>
            <person name="Zhou S."/>
        </authorList>
    </citation>
    <scope>NUCLEOTIDE SEQUENCE [LARGE SCALE GENOMIC DNA]</scope>
    <source>
        <strain>NT</strain>
    </source>
</reference>
<gene>
    <name evidence="1" type="primary">rpoA</name>
    <name type="ordered locus">NT01CX_1144</name>
</gene>
<accession>A0PXX5</accession>
<feature type="chain" id="PRO_0000296795" description="DNA-directed RNA polymerase subunit alpha">
    <location>
        <begin position="1"/>
        <end position="315"/>
    </location>
</feature>
<feature type="region of interest" description="Alpha N-terminal domain (alpha-NTD)" evidence="1">
    <location>
        <begin position="1"/>
        <end position="228"/>
    </location>
</feature>
<feature type="region of interest" description="Alpha C-terminal domain (alpha-CTD)" evidence="1">
    <location>
        <begin position="245"/>
        <end position="315"/>
    </location>
</feature>
<evidence type="ECO:0000255" key="1">
    <source>
        <dbReference type="HAMAP-Rule" id="MF_00059"/>
    </source>
</evidence>
<sequence length="315" mass="34948">MLEIEKPKIECVEASEDGTYGKFVIEPLERGYGITLGNSLRRILLSSLPGGAANSIKIDGVLHEFSTVTGVKEDVTELILNIKGLALKMNGEGPSTIYIDAQGPGEVTAADIISDGNVEIMNKDMHIATLDDDGKLYMEINVDNGRGYVTQNKNKKEDLPIGTIPVDSIYTPVKRVNFTVENTRVGQITDYDKLSIEVWTNGTIQPEEAISLSAKILIEHFKLFMTLTDHADNVEIMVEKEEDKKEKVLEMTIEELDLSVRSYNCLKRAGINTVQELTERTIDDMMKVRNLGKKSLEEVQEKLAALGLGLKKSDE</sequence>
<name>RPOA_CLONN</name>